<reference key="1">
    <citation type="submission" date="2004-06" db="EMBL/GenBank/DDBJ databases">
        <authorList>
            <consortium name="NIH - Xenopus Gene Collection (XGC) project"/>
        </authorList>
    </citation>
    <scope>NUCLEOTIDE SEQUENCE [LARGE SCALE MRNA]</scope>
    <source>
        <tissue>Oocyte</tissue>
    </source>
</reference>
<protein>
    <recommendedName>
        <fullName>V-set and immunoglobulin domain-containing protein 10</fullName>
    </recommendedName>
</protein>
<comment type="subcellular location">
    <subcellularLocation>
        <location evidence="4">Membrane</location>
        <topology evidence="4">Single-pass type I membrane protein</topology>
    </subcellularLocation>
</comment>
<comment type="sequence caution" evidence="4">
    <conflict type="erroneous initiation">
        <sequence resource="EMBL-CDS" id="AAH73724"/>
    </conflict>
    <text>Extended N-terminus.</text>
</comment>
<comment type="sequence caution" evidence="4">
    <conflict type="frameshift">
        <sequence resource="EMBL-CDS" id="AAH94149"/>
    </conflict>
</comment>
<name>VSI10_XENLA</name>
<sequence>MWTRRWIQFLVLCLHLWVTVEGYLGVFRGDVNETITLSCNNVTELTAWFKDNNSGVVLACDGENSSDGRFSRINGSSLVITMLQIQDEGNYSCSKCSEDKSSQAYIQLKVSSGPYNVLADISPTRTLPNGTIYTSVGSNLSFGCSSNSYPAPDLEIVLQRTDANPEPFPSIKGNNFLQFNLINVASNYQGNYTCSAVNPLSGRKLNSTRQLLVYRPPITSIKCYANNSLGFSKMLLSCSWPGGYPDPLLQWEQDGKIIANESFAANTKDTLVTYLNSSSLRVRQQFQCSGKHLSTKENNMKTCQIQIDLPLLESQPMRTCFTGENVTLSCSVSGAVPSATITWLRNISDPESDIQPGKKYLISQKDSLSYLTILNCSHEEDEGYYTCKAENVLGIKEINVWLTVNKPHNIVGLVTALLLLFLLVVAIITGTVLYCDPQIYLKANPFRSGATDVLVLVDSEDEENEEVFDTAESVQYTDIVPNVPPPAANGHLSKHEVMFHRPPESTSSDLFSEVSDDTGEENQNEEI</sequence>
<feature type="signal peptide" evidence="1">
    <location>
        <begin position="1"/>
        <end position="13"/>
    </location>
</feature>
<feature type="chain" id="PRO_0000395116" description="V-set and immunoglobulin domain-containing protein 10">
    <location>
        <begin position="14"/>
        <end position="527"/>
    </location>
</feature>
<feature type="topological domain" description="Extracellular" evidence="1">
    <location>
        <begin position="23"/>
        <end position="409"/>
    </location>
</feature>
<feature type="transmembrane region" description="Helical" evidence="1">
    <location>
        <begin position="410"/>
        <end position="430"/>
    </location>
</feature>
<feature type="topological domain" description="Cytoplasmic" evidence="1">
    <location>
        <begin position="431"/>
        <end position="527"/>
    </location>
</feature>
<feature type="domain" description="Ig-like C2-type 1">
    <location>
        <begin position="14"/>
        <end position="111"/>
    </location>
</feature>
<feature type="domain" description="Ig-like C2-type 2">
    <location>
        <begin position="123"/>
        <end position="212"/>
    </location>
</feature>
<feature type="domain" description="Ig-like C2-type 3">
    <location>
        <begin position="216"/>
        <end position="306"/>
    </location>
</feature>
<feature type="domain" description="Ig-like C2-type 4">
    <location>
        <begin position="310"/>
        <end position="399"/>
    </location>
</feature>
<feature type="region of interest" description="Disordered" evidence="3">
    <location>
        <begin position="501"/>
        <end position="527"/>
    </location>
</feature>
<feature type="compositionally biased region" description="Acidic residues" evidence="3">
    <location>
        <begin position="514"/>
        <end position="527"/>
    </location>
</feature>
<feature type="glycosylation site" description="N-linked (GlcNAc...) asparagine" evidence="1">
    <location>
        <position position="32"/>
    </location>
</feature>
<feature type="glycosylation site" description="N-linked (GlcNAc...) asparagine" evidence="1">
    <location>
        <position position="41"/>
    </location>
</feature>
<feature type="glycosylation site" description="N-linked (GlcNAc...) asparagine" evidence="1">
    <location>
        <position position="52"/>
    </location>
</feature>
<feature type="glycosylation site" description="N-linked (GlcNAc...) asparagine" evidence="1">
    <location>
        <position position="64"/>
    </location>
</feature>
<feature type="glycosylation site" description="N-linked (GlcNAc...) asparagine" evidence="1">
    <location>
        <position position="74"/>
    </location>
</feature>
<feature type="glycosylation site" description="N-linked (GlcNAc...) asparagine" evidence="1">
    <location>
        <position position="90"/>
    </location>
</feature>
<feature type="glycosylation site" description="N-linked (GlcNAc...) asparagine" evidence="1">
    <location>
        <position position="129"/>
    </location>
</feature>
<feature type="glycosylation site" description="N-linked (GlcNAc...) asparagine" evidence="1">
    <location>
        <position position="139"/>
    </location>
</feature>
<feature type="glycosylation site" description="N-linked (GlcNAc...) asparagine" evidence="1">
    <location>
        <position position="191"/>
    </location>
</feature>
<feature type="glycosylation site" description="N-linked (GlcNAc...) asparagine" evidence="1">
    <location>
        <position position="206"/>
    </location>
</feature>
<feature type="glycosylation site" description="N-linked (GlcNAc...) asparagine" evidence="1">
    <location>
        <position position="226"/>
    </location>
</feature>
<feature type="glycosylation site" description="N-linked (GlcNAc...) asparagine" evidence="1">
    <location>
        <position position="260"/>
    </location>
</feature>
<feature type="glycosylation site" description="N-linked (GlcNAc...) asparagine" evidence="1">
    <location>
        <position position="276"/>
    </location>
</feature>
<feature type="glycosylation site" description="N-linked (GlcNAc...) asparagine" evidence="1">
    <location>
        <position position="325"/>
    </location>
</feature>
<feature type="glycosylation site" description="N-linked (GlcNAc...) asparagine" evidence="1">
    <location>
        <position position="346"/>
    </location>
</feature>
<feature type="glycosylation site" description="N-linked (GlcNAc...) asparagine" evidence="1">
    <location>
        <position position="375"/>
    </location>
</feature>
<feature type="disulfide bond" evidence="2">
    <location>
        <begin position="144"/>
        <end position="194"/>
    </location>
</feature>
<feature type="disulfide bond" evidence="2">
    <location>
        <begin position="238"/>
        <end position="288"/>
    </location>
</feature>
<feature type="disulfide bond" evidence="2">
    <location>
        <begin position="330"/>
        <end position="387"/>
    </location>
</feature>
<gene>
    <name type="primary">vsig10</name>
</gene>
<keyword id="KW-1015">Disulfide bond</keyword>
<keyword id="KW-0325">Glycoprotein</keyword>
<keyword id="KW-0393">Immunoglobulin domain</keyword>
<keyword id="KW-0472">Membrane</keyword>
<keyword id="KW-1185">Reference proteome</keyword>
<keyword id="KW-0677">Repeat</keyword>
<keyword id="KW-0732">Signal</keyword>
<keyword id="KW-0812">Transmembrane</keyword>
<keyword id="KW-1133">Transmembrane helix</keyword>
<organism>
    <name type="scientific">Xenopus laevis</name>
    <name type="common">African clawed frog</name>
    <dbReference type="NCBI Taxonomy" id="8355"/>
    <lineage>
        <taxon>Eukaryota</taxon>
        <taxon>Metazoa</taxon>
        <taxon>Chordata</taxon>
        <taxon>Craniata</taxon>
        <taxon>Vertebrata</taxon>
        <taxon>Euteleostomi</taxon>
        <taxon>Amphibia</taxon>
        <taxon>Batrachia</taxon>
        <taxon>Anura</taxon>
        <taxon>Pipoidea</taxon>
        <taxon>Pipidae</taxon>
        <taxon>Xenopodinae</taxon>
        <taxon>Xenopus</taxon>
        <taxon>Xenopus</taxon>
    </lineage>
</organism>
<dbReference type="EMBL" id="BC073724">
    <property type="protein sequence ID" value="AAH73724.1"/>
    <property type="status" value="ALT_INIT"/>
    <property type="molecule type" value="mRNA"/>
</dbReference>
<dbReference type="EMBL" id="BC094149">
    <property type="protein sequence ID" value="AAH94149.1"/>
    <property type="status" value="ALT_FRAME"/>
    <property type="molecule type" value="mRNA"/>
</dbReference>
<dbReference type="RefSeq" id="NP_001085300.1">
    <property type="nucleotide sequence ID" value="NM_001091831.1"/>
</dbReference>
<dbReference type="SMR" id="Q6GMZ9"/>
<dbReference type="GlyCosmos" id="Q6GMZ9">
    <property type="glycosylation" value="16 sites, No reported glycans"/>
</dbReference>
<dbReference type="DNASU" id="443689"/>
<dbReference type="AGR" id="Xenbase:XB-GENE-5959361"/>
<dbReference type="Xenbase" id="XB-GENE-5959361">
    <property type="gene designation" value="vsig10.L"/>
</dbReference>
<dbReference type="Proteomes" id="UP000186698">
    <property type="component" value="Unplaced"/>
</dbReference>
<dbReference type="Bgee" id="443689">
    <property type="expression patterns" value="Expressed in blastula and 17 other cell types or tissues"/>
</dbReference>
<dbReference type="GO" id="GO:0005911">
    <property type="term" value="C:cell-cell junction"/>
    <property type="evidence" value="ECO:0000318"/>
    <property type="project" value="GO_Central"/>
</dbReference>
<dbReference type="GO" id="GO:0005886">
    <property type="term" value="C:plasma membrane"/>
    <property type="evidence" value="ECO:0000318"/>
    <property type="project" value="GO_Central"/>
</dbReference>
<dbReference type="GO" id="GO:0050839">
    <property type="term" value="F:cell adhesion molecule binding"/>
    <property type="evidence" value="ECO:0000318"/>
    <property type="project" value="GO_Central"/>
</dbReference>
<dbReference type="GO" id="GO:0098609">
    <property type="term" value="P:cell-cell adhesion"/>
    <property type="evidence" value="ECO:0000318"/>
    <property type="project" value="GO_Central"/>
</dbReference>
<dbReference type="GO" id="GO:0007416">
    <property type="term" value="P:synapse assembly"/>
    <property type="evidence" value="ECO:0000318"/>
    <property type="project" value="GO_Central"/>
</dbReference>
<dbReference type="CDD" id="cd00096">
    <property type="entry name" value="Ig"/>
    <property type="match status" value="1"/>
</dbReference>
<dbReference type="Gene3D" id="2.60.40.10">
    <property type="entry name" value="Immunoglobulins"/>
    <property type="match status" value="4"/>
</dbReference>
<dbReference type="InterPro" id="IPR013162">
    <property type="entry name" value="CD80_C2-set"/>
</dbReference>
<dbReference type="InterPro" id="IPR051275">
    <property type="entry name" value="Cell_adhesion_signaling"/>
</dbReference>
<dbReference type="InterPro" id="IPR007110">
    <property type="entry name" value="Ig-like_dom"/>
</dbReference>
<dbReference type="InterPro" id="IPR036179">
    <property type="entry name" value="Ig-like_dom_sf"/>
</dbReference>
<dbReference type="InterPro" id="IPR013783">
    <property type="entry name" value="Ig-like_fold"/>
</dbReference>
<dbReference type="InterPro" id="IPR013098">
    <property type="entry name" value="Ig_I-set"/>
</dbReference>
<dbReference type="InterPro" id="IPR003599">
    <property type="entry name" value="Ig_sub"/>
</dbReference>
<dbReference type="InterPro" id="IPR003598">
    <property type="entry name" value="Ig_sub2"/>
</dbReference>
<dbReference type="PANTHER" id="PTHR11640">
    <property type="entry name" value="NEPHRIN"/>
    <property type="match status" value="1"/>
</dbReference>
<dbReference type="PANTHER" id="PTHR11640:SF157">
    <property type="entry name" value="V-SET AND IMMUNOGLOBULIN DOMAIN-CONTAINING PROTEIN 10"/>
    <property type="match status" value="1"/>
</dbReference>
<dbReference type="Pfam" id="PF08205">
    <property type="entry name" value="C2-set_2"/>
    <property type="match status" value="1"/>
</dbReference>
<dbReference type="Pfam" id="PF07679">
    <property type="entry name" value="I-set"/>
    <property type="match status" value="1"/>
</dbReference>
<dbReference type="SMART" id="SM00409">
    <property type="entry name" value="IG"/>
    <property type="match status" value="3"/>
</dbReference>
<dbReference type="SMART" id="SM00408">
    <property type="entry name" value="IGc2"/>
    <property type="match status" value="3"/>
</dbReference>
<dbReference type="SUPFAM" id="SSF48726">
    <property type="entry name" value="Immunoglobulin"/>
    <property type="match status" value="4"/>
</dbReference>
<dbReference type="PROSITE" id="PS50835">
    <property type="entry name" value="IG_LIKE"/>
    <property type="match status" value="4"/>
</dbReference>
<proteinExistence type="evidence at transcript level"/>
<accession>Q6GMZ9</accession>
<accession>Q52KX7</accession>
<evidence type="ECO:0000255" key="1"/>
<evidence type="ECO:0000255" key="2">
    <source>
        <dbReference type="PROSITE-ProRule" id="PRU00114"/>
    </source>
</evidence>
<evidence type="ECO:0000256" key="3">
    <source>
        <dbReference type="SAM" id="MobiDB-lite"/>
    </source>
</evidence>
<evidence type="ECO:0000305" key="4"/>